<evidence type="ECO:0000255" key="1">
    <source>
        <dbReference type="HAMAP-Rule" id="MF_00051"/>
    </source>
</evidence>
<sequence>MLRDQQIFDLIIEEQDRQIHGLELIASENFVSDQVMEAAGSVLTNKYAEGYPGKRYYGGCEVVDVIEQIAIDRAKDLFGAEYANVQPHSGSQANTAVFAACLKPGDTILGFDLSHGGHLTHGSPVNFSGKLYNPTFYGVEPETGMLNYDKIQEIATKEQPKLIIAGASAYSRDMDFERFRKIADSVGAILMADISHPAGLIAKGLMNDPIPHCHIITTTTHKTLRGPRGGLIMMGKDFENPWGLKTPKGEIRMMSHVLDMSVFPGNQGGPLEHIIAAKAVAFGEALTDEFFRYAMQVQKNAKAMAAAFVKRDYHIISGGTDNHMMLIDLRNKNISGKEAENALVKAEITVNKNMVPFDDKSPFVTSGIRVGTPAITTRGLLEEDMETIVAFIDKVIMNHTNEEILEEVADAVNEMMGERAIFVF</sequence>
<name>GLYA_FLAPJ</name>
<gene>
    <name evidence="1" type="primary">glyA</name>
    <name type="ordered locus">FP0681</name>
</gene>
<keyword id="KW-0028">Amino-acid biosynthesis</keyword>
<keyword id="KW-0963">Cytoplasm</keyword>
<keyword id="KW-0554">One-carbon metabolism</keyword>
<keyword id="KW-0663">Pyridoxal phosphate</keyword>
<keyword id="KW-1185">Reference proteome</keyword>
<keyword id="KW-0808">Transferase</keyword>
<reference key="1">
    <citation type="journal article" date="2007" name="Nat. Biotechnol.">
        <title>Complete genome sequence of the fish pathogen Flavobacterium psychrophilum.</title>
        <authorList>
            <person name="Duchaud E."/>
            <person name="Boussaha M."/>
            <person name="Loux V."/>
            <person name="Bernardet J.-F."/>
            <person name="Michel C."/>
            <person name="Kerouault B."/>
            <person name="Mondot S."/>
            <person name="Nicolas P."/>
            <person name="Bossy R."/>
            <person name="Caron C."/>
            <person name="Bessieres P."/>
            <person name="Gibrat J.-F."/>
            <person name="Claverol S."/>
            <person name="Dumetz F."/>
            <person name="Le Henaff M."/>
            <person name="Benmansour A."/>
        </authorList>
    </citation>
    <scope>NUCLEOTIDE SEQUENCE [LARGE SCALE GENOMIC DNA]</scope>
    <source>
        <strain>ATCC 49511 / DSM 21280 / CIP 103535 / JIP02/86</strain>
    </source>
</reference>
<comment type="function">
    <text evidence="1">Catalyzes the reversible interconversion of serine and glycine with tetrahydrofolate (THF) serving as the one-carbon carrier. This reaction serves as the major source of one-carbon groups required for the biosynthesis of purines, thymidylate, methionine, and other important biomolecules. Also exhibits THF-independent aldolase activity toward beta-hydroxyamino acids, producing glycine and aldehydes, via a retro-aldol mechanism.</text>
</comment>
<comment type="catalytic activity">
    <reaction evidence="1">
        <text>(6R)-5,10-methylene-5,6,7,8-tetrahydrofolate + glycine + H2O = (6S)-5,6,7,8-tetrahydrofolate + L-serine</text>
        <dbReference type="Rhea" id="RHEA:15481"/>
        <dbReference type="ChEBI" id="CHEBI:15377"/>
        <dbReference type="ChEBI" id="CHEBI:15636"/>
        <dbReference type="ChEBI" id="CHEBI:33384"/>
        <dbReference type="ChEBI" id="CHEBI:57305"/>
        <dbReference type="ChEBI" id="CHEBI:57453"/>
        <dbReference type="EC" id="2.1.2.1"/>
    </reaction>
</comment>
<comment type="cofactor">
    <cofactor evidence="1">
        <name>pyridoxal 5'-phosphate</name>
        <dbReference type="ChEBI" id="CHEBI:597326"/>
    </cofactor>
</comment>
<comment type="pathway">
    <text evidence="1">One-carbon metabolism; tetrahydrofolate interconversion.</text>
</comment>
<comment type="pathway">
    <text evidence="1">Amino-acid biosynthesis; glycine biosynthesis; glycine from L-serine: step 1/1.</text>
</comment>
<comment type="subunit">
    <text evidence="1">Homodimer.</text>
</comment>
<comment type="subcellular location">
    <subcellularLocation>
        <location evidence="1">Cytoplasm</location>
    </subcellularLocation>
</comment>
<comment type="similarity">
    <text evidence="1">Belongs to the SHMT family.</text>
</comment>
<organism>
    <name type="scientific">Flavobacterium psychrophilum (strain ATCC 49511 / DSM 21280 / CIP 103535 / JIP02/86)</name>
    <dbReference type="NCBI Taxonomy" id="402612"/>
    <lineage>
        <taxon>Bacteria</taxon>
        <taxon>Pseudomonadati</taxon>
        <taxon>Bacteroidota</taxon>
        <taxon>Flavobacteriia</taxon>
        <taxon>Flavobacteriales</taxon>
        <taxon>Flavobacteriaceae</taxon>
        <taxon>Flavobacterium</taxon>
    </lineage>
</organism>
<dbReference type="EC" id="2.1.2.1" evidence="1"/>
<dbReference type="EMBL" id="AM398681">
    <property type="protein sequence ID" value="CAL42785.1"/>
    <property type="molecule type" value="Genomic_DNA"/>
</dbReference>
<dbReference type="RefSeq" id="WP_011962841.1">
    <property type="nucleotide sequence ID" value="NC_009613.3"/>
</dbReference>
<dbReference type="RefSeq" id="YP_001295601.1">
    <property type="nucleotide sequence ID" value="NC_009613.3"/>
</dbReference>
<dbReference type="SMR" id="A6GXG2"/>
<dbReference type="STRING" id="402612.FP0681"/>
<dbReference type="EnsemblBacteria" id="CAL42785">
    <property type="protein sequence ID" value="CAL42785"/>
    <property type="gene ID" value="FP0681"/>
</dbReference>
<dbReference type="GeneID" id="66552638"/>
<dbReference type="KEGG" id="fps:FP0681"/>
<dbReference type="PATRIC" id="fig|402612.5.peg.698"/>
<dbReference type="eggNOG" id="COG0112">
    <property type="taxonomic scope" value="Bacteria"/>
</dbReference>
<dbReference type="HOGENOM" id="CLU_022477_2_1_10"/>
<dbReference type="OrthoDB" id="9803846at2"/>
<dbReference type="UniPathway" id="UPA00193"/>
<dbReference type="UniPathway" id="UPA00288">
    <property type="reaction ID" value="UER01023"/>
</dbReference>
<dbReference type="Proteomes" id="UP000006394">
    <property type="component" value="Chromosome"/>
</dbReference>
<dbReference type="GO" id="GO:0005829">
    <property type="term" value="C:cytosol"/>
    <property type="evidence" value="ECO:0007669"/>
    <property type="project" value="TreeGrafter"/>
</dbReference>
<dbReference type="GO" id="GO:0004372">
    <property type="term" value="F:glycine hydroxymethyltransferase activity"/>
    <property type="evidence" value="ECO:0007669"/>
    <property type="project" value="UniProtKB-UniRule"/>
</dbReference>
<dbReference type="GO" id="GO:0030170">
    <property type="term" value="F:pyridoxal phosphate binding"/>
    <property type="evidence" value="ECO:0007669"/>
    <property type="project" value="UniProtKB-UniRule"/>
</dbReference>
<dbReference type="GO" id="GO:0019264">
    <property type="term" value="P:glycine biosynthetic process from serine"/>
    <property type="evidence" value="ECO:0007669"/>
    <property type="project" value="UniProtKB-UniRule"/>
</dbReference>
<dbReference type="GO" id="GO:0035999">
    <property type="term" value="P:tetrahydrofolate interconversion"/>
    <property type="evidence" value="ECO:0007669"/>
    <property type="project" value="UniProtKB-UniRule"/>
</dbReference>
<dbReference type="CDD" id="cd00378">
    <property type="entry name" value="SHMT"/>
    <property type="match status" value="1"/>
</dbReference>
<dbReference type="FunFam" id="3.40.640.10:FF:000001">
    <property type="entry name" value="Serine hydroxymethyltransferase"/>
    <property type="match status" value="1"/>
</dbReference>
<dbReference type="Gene3D" id="3.90.1150.10">
    <property type="entry name" value="Aspartate Aminotransferase, domain 1"/>
    <property type="match status" value="1"/>
</dbReference>
<dbReference type="Gene3D" id="3.40.640.10">
    <property type="entry name" value="Type I PLP-dependent aspartate aminotransferase-like (Major domain)"/>
    <property type="match status" value="1"/>
</dbReference>
<dbReference type="HAMAP" id="MF_00051">
    <property type="entry name" value="SHMT"/>
    <property type="match status" value="1"/>
</dbReference>
<dbReference type="InterPro" id="IPR015424">
    <property type="entry name" value="PyrdxlP-dep_Trfase"/>
</dbReference>
<dbReference type="InterPro" id="IPR015421">
    <property type="entry name" value="PyrdxlP-dep_Trfase_major"/>
</dbReference>
<dbReference type="InterPro" id="IPR015422">
    <property type="entry name" value="PyrdxlP-dep_Trfase_small"/>
</dbReference>
<dbReference type="InterPro" id="IPR001085">
    <property type="entry name" value="Ser_HO-MeTrfase"/>
</dbReference>
<dbReference type="InterPro" id="IPR049943">
    <property type="entry name" value="Ser_HO-MeTrfase-like"/>
</dbReference>
<dbReference type="InterPro" id="IPR019798">
    <property type="entry name" value="Ser_HO-MeTrfase_PLP_BS"/>
</dbReference>
<dbReference type="InterPro" id="IPR039429">
    <property type="entry name" value="SHMT-like_dom"/>
</dbReference>
<dbReference type="NCBIfam" id="NF000586">
    <property type="entry name" value="PRK00011.1"/>
    <property type="match status" value="1"/>
</dbReference>
<dbReference type="PANTHER" id="PTHR11680">
    <property type="entry name" value="SERINE HYDROXYMETHYLTRANSFERASE"/>
    <property type="match status" value="1"/>
</dbReference>
<dbReference type="PANTHER" id="PTHR11680:SF35">
    <property type="entry name" value="SERINE HYDROXYMETHYLTRANSFERASE 1"/>
    <property type="match status" value="1"/>
</dbReference>
<dbReference type="Pfam" id="PF00464">
    <property type="entry name" value="SHMT"/>
    <property type="match status" value="1"/>
</dbReference>
<dbReference type="PIRSF" id="PIRSF000412">
    <property type="entry name" value="SHMT"/>
    <property type="match status" value="1"/>
</dbReference>
<dbReference type="SUPFAM" id="SSF53383">
    <property type="entry name" value="PLP-dependent transferases"/>
    <property type="match status" value="1"/>
</dbReference>
<dbReference type="PROSITE" id="PS00096">
    <property type="entry name" value="SHMT"/>
    <property type="match status" value="1"/>
</dbReference>
<proteinExistence type="inferred from homology"/>
<feature type="chain" id="PRO_1000006249" description="Serine hydroxymethyltransferase">
    <location>
        <begin position="1"/>
        <end position="424"/>
    </location>
</feature>
<feature type="binding site" evidence="1">
    <location>
        <position position="113"/>
    </location>
    <ligand>
        <name>(6S)-5,6,7,8-tetrahydrofolate</name>
        <dbReference type="ChEBI" id="CHEBI:57453"/>
    </ligand>
</feature>
<feature type="binding site" evidence="1">
    <location>
        <begin position="117"/>
        <end position="119"/>
    </location>
    <ligand>
        <name>(6S)-5,6,7,8-tetrahydrofolate</name>
        <dbReference type="ChEBI" id="CHEBI:57453"/>
    </ligand>
</feature>
<feature type="binding site" evidence="1">
    <location>
        <begin position="361"/>
        <end position="363"/>
    </location>
    <ligand>
        <name>(6S)-5,6,7,8-tetrahydrofolate</name>
        <dbReference type="ChEBI" id="CHEBI:57453"/>
    </ligand>
</feature>
<feature type="site" description="Plays an important role in substrate specificity" evidence="1">
    <location>
        <position position="221"/>
    </location>
</feature>
<feature type="modified residue" description="N6-(pyridoxal phosphate)lysine" evidence="1">
    <location>
        <position position="222"/>
    </location>
</feature>
<protein>
    <recommendedName>
        <fullName evidence="1">Serine hydroxymethyltransferase</fullName>
        <shortName evidence="1">SHMT</shortName>
        <shortName evidence="1">Serine methylase</shortName>
        <ecNumber evidence="1">2.1.2.1</ecNumber>
    </recommendedName>
</protein>
<accession>A6GXG2</accession>